<organism>
    <name type="scientific">Rattus norvegicus</name>
    <name type="common">Rat</name>
    <dbReference type="NCBI Taxonomy" id="10116"/>
    <lineage>
        <taxon>Eukaryota</taxon>
        <taxon>Metazoa</taxon>
        <taxon>Chordata</taxon>
        <taxon>Craniata</taxon>
        <taxon>Vertebrata</taxon>
        <taxon>Euteleostomi</taxon>
        <taxon>Mammalia</taxon>
        <taxon>Eutheria</taxon>
        <taxon>Euarchontoglires</taxon>
        <taxon>Glires</taxon>
        <taxon>Rodentia</taxon>
        <taxon>Myomorpha</taxon>
        <taxon>Muroidea</taxon>
        <taxon>Muridae</taxon>
        <taxon>Murinae</taxon>
        <taxon>Rattus</taxon>
    </lineage>
</organism>
<evidence type="ECO:0000250" key="1">
    <source>
        <dbReference type="UniProtKB" id="P49356"/>
    </source>
</evidence>
<evidence type="ECO:0000250" key="2">
    <source>
        <dbReference type="UniProtKB" id="Q8K2I1"/>
    </source>
</evidence>
<evidence type="ECO:0000269" key="3">
    <source>
    </source>
</evidence>
<evidence type="ECO:0000269" key="4">
    <source>
    </source>
</evidence>
<evidence type="ECO:0000269" key="5">
    <source>
    </source>
</evidence>
<evidence type="ECO:0000269" key="6">
    <source>
    </source>
</evidence>
<evidence type="ECO:0000269" key="7">
    <source>
    </source>
</evidence>
<evidence type="ECO:0000269" key="8">
    <source>
    </source>
</evidence>
<evidence type="ECO:0000269" key="9">
    <source>
    </source>
</evidence>
<evidence type="ECO:0000269" key="10">
    <source>
    </source>
</evidence>
<evidence type="ECO:0000269" key="11">
    <source>
    </source>
</evidence>
<evidence type="ECO:0000269" key="12">
    <source>
    </source>
</evidence>
<evidence type="ECO:0000269" key="13">
    <source>
    </source>
</evidence>
<evidence type="ECO:0000269" key="14">
    <source>
    </source>
</evidence>
<evidence type="ECO:0000269" key="15">
    <source>
    </source>
</evidence>
<evidence type="ECO:0000269" key="16">
    <source>
    </source>
</evidence>
<evidence type="ECO:0000305" key="17"/>
<evidence type="ECO:0007829" key="18">
    <source>
        <dbReference type="PDB" id="1FT1"/>
    </source>
</evidence>
<evidence type="ECO:0007829" key="19">
    <source>
        <dbReference type="PDB" id="1N94"/>
    </source>
</evidence>
<evidence type="ECO:0007829" key="20">
    <source>
        <dbReference type="PDB" id="1NI1"/>
    </source>
</evidence>
<evidence type="ECO:0007829" key="21">
    <source>
        <dbReference type="PDB" id="3E33"/>
    </source>
</evidence>
<sequence>MASSSSFTYYCPPSSSPVWSEPLYSLRPEHARERLQDDSVETVTSIEQAKVEEKIQEVFSSYKFNHLVPRLVLQREKHFHYLKRGLRQLTDAYECLDASRPWLCYWILHSLELLDEPIPQIVATDVCQFLELCQSPDGGFGGGPGQYPHLAPTYAAVNALCIIGTEEAYNVINREKLLQYLYSLKQPDGSFLMHVGGEVDVRSAYCAASVASLTNIITPDLFEGTAEWIARCQNWEGGIGGVPGMEAHGGYTFCGLAALVILKKERSLNLKSLLQWVTSRQMRFEGGFQGRCNKLVDGCYSFWQAGLLPLLHRALHAQGDPALSMSHWMFHQQALQEYILMCCQCPAGGLLDKPGKSRDFYHTCYCLSGLSIAQHFGSGAMLHDVVMGVPENVLQPTHPVYNIGPDKVIQATTHFLQKPVPGFEECEDAVTSDPATD</sequence>
<dbReference type="EC" id="2.5.1.58" evidence="3 8 9 10 12"/>
<dbReference type="EMBL" id="M69056">
    <property type="protein sequence ID" value="AAA41176.1"/>
    <property type="molecule type" value="mRNA"/>
</dbReference>
<dbReference type="EMBL" id="BC087675">
    <property type="protein sequence ID" value="AAH87675.1"/>
    <property type="molecule type" value="mRNA"/>
</dbReference>
<dbReference type="PIR" id="A40037">
    <property type="entry name" value="A40037"/>
</dbReference>
<dbReference type="RefSeq" id="NP_742031.1">
    <property type="nucleotide sequence ID" value="NM_172034.2"/>
</dbReference>
<dbReference type="PDB" id="1D8D">
    <property type="method" value="X-ray"/>
    <property type="resolution" value="2.00 A"/>
    <property type="chains" value="B=1-437"/>
</dbReference>
<dbReference type="PDB" id="1D8E">
    <property type="method" value="X-ray"/>
    <property type="resolution" value="3.00 A"/>
    <property type="chains" value="B=1-437"/>
</dbReference>
<dbReference type="PDB" id="1FPP">
    <property type="method" value="X-ray"/>
    <property type="resolution" value="2.75 A"/>
    <property type="chains" value="B=1-437"/>
</dbReference>
<dbReference type="PDB" id="1FT1">
    <property type="method" value="X-ray"/>
    <property type="resolution" value="2.25 A"/>
    <property type="chains" value="B=1-437"/>
</dbReference>
<dbReference type="PDB" id="1FT2">
    <property type="method" value="X-ray"/>
    <property type="resolution" value="3.40 A"/>
    <property type="chains" value="B=22-422"/>
</dbReference>
<dbReference type="PDB" id="1JCR">
    <property type="method" value="X-ray"/>
    <property type="resolution" value="2.00 A"/>
    <property type="chains" value="B=1-437"/>
</dbReference>
<dbReference type="PDB" id="1JCS">
    <property type="method" value="X-ray"/>
    <property type="resolution" value="2.20 A"/>
    <property type="chains" value="B=1-437"/>
</dbReference>
<dbReference type="PDB" id="1KZO">
    <property type="method" value="X-ray"/>
    <property type="resolution" value="2.20 A"/>
    <property type="chains" value="B=1-437"/>
</dbReference>
<dbReference type="PDB" id="1KZP">
    <property type="method" value="X-ray"/>
    <property type="resolution" value="2.10 A"/>
    <property type="chains" value="B=1-437"/>
</dbReference>
<dbReference type="PDB" id="1N94">
    <property type="method" value="X-ray"/>
    <property type="resolution" value="3.50 A"/>
    <property type="chains" value="B=22-418"/>
</dbReference>
<dbReference type="PDB" id="1N95">
    <property type="method" value="X-ray"/>
    <property type="resolution" value="2.30 A"/>
    <property type="chains" value="B=22-423"/>
</dbReference>
<dbReference type="PDB" id="1N9A">
    <property type="method" value="X-ray"/>
    <property type="resolution" value="3.20 A"/>
    <property type="chains" value="B=22-423"/>
</dbReference>
<dbReference type="PDB" id="1NI1">
    <property type="method" value="X-ray"/>
    <property type="resolution" value="2.30 A"/>
    <property type="chains" value="B=22-423"/>
</dbReference>
<dbReference type="PDB" id="1NL4">
    <property type="method" value="X-ray"/>
    <property type="resolution" value="2.70 A"/>
    <property type="chains" value="B=23-423"/>
</dbReference>
<dbReference type="PDB" id="1O1R">
    <property type="method" value="X-ray"/>
    <property type="resolution" value="2.30 A"/>
    <property type="chains" value="B=1-427"/>
</dbReference>
<dbReference type="PDB" id="1O1S">
    <property type="method" value="X-ray"/>
    <property type="resolution" value="2.30 A"/>
    <property type="chains" value="B=1-427"/>
</dbReference>
<dbReference type="PDB" id="1O1T">
    <property type="method" value="X-ray"/>
    <property type="resolution" value="2.10 A"/>
    <property type="chains" value="B=1-427"/>
</dbReference>
<dbReference type="PDB" id="1O5M">
    <property type="method" value="X-ray"/>
    <property type="resolution" value="2.30 A"/>
    <property type="chains" value="B=1-437"/>
</dbReference>
<dbReference type="PDB" id="1QBQ">
    <property type="method" value="X-ray"/>
    <property type="resolution" value="2.40 A"/>
    <property type="chains" value="B=1-437"/>
</dbReference>
<dbReference type="PDB" id="1SA5">
    <property type="method" value="X-ray"/>
    <property type="resolution" value="2.60 A"/>
    <property type="chains" value="B=1-437"/>
</dbReference>
<dbReference type="PDB" id="1TN7">
    <property type="method" value="X-ray"/>
    <property type="resolution" value="2.30 A"/>
    <property type="chains" value="B=1-437"/>
</dbReference>
<dbReference type="PDB" id="1TN8">
    <property type="method" value="X-ray"/>
    <property type="resolution" value="2.25 A"/>
    <property type="chains" value="B=1-437"/>
</dbReference>
<dbReference type="PDB" id="1X81">
    <property type="method" value="X-ray"/>
    <property type="resolution" value="3.50 A"/>
    <property type="chains" value="B=22-418"/>
</dbReference>
<dbReference type="PDB" id="2BED">
    <property type="method" value="X-ray"/>
    <property type="resolution" value="2.70 A"/>
    <property type="chains" value="B=23-423"/>
</dbReference>
<dbReference type="PDB" id="2R2L">
    <property type="method" value="X-ray"/>
    <property type="resolution" value="2.23 A"/>
    <property type="chains" value="B=23-423"/>
</dbReference>
<dbReference type="PDB" id="2ZIR">
    <property type="method" value="X-ray"/>
    <property type="resolution" value="2.40 A"/>
    <property type="chains" value="B=1-437"/>
</dbReference>
<dbReference type="PDB" id="2ZIS">
    <property type="method" value="X-ray"/>
    <property type="resolution" value="2.60 A"/>
    <property type="chains" value="B=1-437"/>
</dbReference>
<dbReference type="PDB" id="3DPY">
    <property type="method" value="X-ray"/>
    <property type="resolution" value="2.70 A"/>
    <property type="chains" value="B=1-437"/>
</dbReference>
<dbReference type="PDB" id="3E30">
    <property type="method" value="X-ray"/>
    <property type="resolution" value="2.45 A"/>
    <property type="chains" value="B=1-437"/>
</dbReference>
<dbReference type="PDB" id="3E32">
    <property type="method" value="X-ray"/>
    <property type="resolution" value="2.45 A"/>
    <property type="chains" value="B=1-437"/>
</dbReference>
<dbReference type="PDB" id="3E33">
    <property type="method" value="X-ray"/>
    <property type="resolution" value="1.90 A"/>
    <property type="chains" value="B=1-437"/>
</dbReference>
<dbReference type="PDB" id="3E34">
    <property type="method" value="X-ray"/>
    <property type="resolution" value="2.05 A"/>
    <property type="chains" value="B=1-437"/>
</dbReference>
<dbReference type="PDB" id="3EU5">
    <property type="method" value="X-ray"/>
    <property type="resolution" value="2.80 A"/>
    <property type="chains" value="B=1-427"/>
</dbReference>
<dbReference type="PDB" id="3EUV">
    <property type="method" value="X-ray"/>
    <property type="resolution" value="2.75 A"/>
    <property type="chains" value="B=1-427"/>
</dbReference>
<dbReference type="PDB" id="3KSL">
    <property type="method" value="X-ray"/>
    <property type="resolution" value="2.05 A"/>
    <property type="chains" value="B=1-437"/>
</dbReference>
<dbReference type="PDB" id="3KSQ">
    <property type="method" value="X-ray"/>
    <property type="resolution" value="2.10 A"/>
    <property type="chains" value="B=1-437"/>
</dbReference>
<dbReference type="PDB" id="4GTM">
    <property type="method" value="X-ray"/>
    <property type="resolution" value="2.20 A"/>
    <property type="chains" value="B=1-427"/>
</dbReference>
<dbReference type="PDB" id="4GTO">
    <property type="method" value="X-ray"/>
    <property type="resolution" value="2.15 A"/>
    <property type="chains" value="B=1-427"/>
</dbReference>
<dbReference type="PDB" id="4GTP">
    <property type="method" value="X-ray"/>
    <property type="resolution" value="2.75 A"/>
    <property type="chains" value="B=1-427"/>
</dbReference>
<dbReference type="PDB" id="4GTQ">
    <property type="method" value="X-ray"/>
    <property type="resolution" value="2.60 A"/>
    <property type="chains" value="B=1-427"/>
</dbReference>
<dbReference type="PDB" id="4GTR">
    <property type="method" value="X-ray"/>
    <property type="resolution" value="2.20 A"/>
    <property type="chains" value="B=1-427"/>
</dbReference>
<dbReference type="PDB" id="7RN5">
    <property type="method" value="X-ray"/>
    <property type="resolution" value="2.28 A"/>
    <property type="chains" value="B=1-437"/>
</dbReference>
<dbReference type="PDB" id="7RNI">
    <property type="method" value="X-ray"/>
    <property type="resolution" value="1.98 A"/>
    <property type="chains" value="B=1-437"/>
</dbReference>
<dbReference type="PDB" id="8E9E">
    <property type="method" value="X-ray"/>
    <property type="resolution" value="2.84 A"/>
    <property type="chains" value="B=1-437"/>
</dbReference>
<dbReference type="PDBsum" id="1D8D"/>
<dbReference type="PDBsum" id="1D8E"/>
<dbReference type="PDBsum" id="1FPP"/>
<dbReference type="PDBsum" id="1FT1"/>
<dbReference type="PDBsum" id="1FT2"/>
<dbReference type="PDBsum" id="1JCR"/>
<dbReference type="PDBsum" id="1JCS"/>
<dbReference type="PDBsum" id="1KZO"/>
<dbReference type="PDBsum" id="1KZP"/>
<dbReference type="PDBsum" id="1N94"/>
<dbReference type="PDBsum" id="1N95"/>
<dbReference type="PDBsum" id="1N9A"/>
<dbReference type="PDBsum" id="1NI1"/>
<dbReference type="PDBsum" id="1NL4"/>
<dbReference type="PDBsum" id="1O1R"/>
<dbReference type="PDBsum" id="1O1S"/>
<dbReference type="PDBsum" id="1O1T"/>
<dbReference type="PDBsum" id="1O5M"/>
<dbReference type="PDBsum" id="1QBQ"/>
<dbReference type="PDBsum" id="1SA5"/>
<dbReference type="PDBsum" id="1TN7"/>
<dbReference type="PDBsum" id="1TN8"/>
<dbReference type="PDBsum" id="1X81"/>
<dbReference type="PDBsum" id="2BED"/>
<dbReference type="PDBsum" id="2R2L"/>
<dbReference type="PDBsum" id="2ZIR"/>
<dbReference type="PDBsum" id="2ZIS"/>
<dbReference type="PDBsum" id="3DPY"/>
<dbReference type="PDBsum" id="3E30"/>
<dbReference type="PDBsum" id="3E32"/>
<dbReference type="PDBsum" id="3E33"/>
<dbReference type="PDBsum" id="3E34"/>
<dbReference type="PDBsum" id="3EU5"/>
<dbReference type="PDBsum" id="3EUV"/>
<dbReference type="PDBsum" id="3KSL"/>
<dbReference type="PDBsum" id="3KSQ"/>
<dbReference type="PDBsum" id="4GTM"/>
<dbReference type="PDBsum" id="4GTO"/>
<dbReference type="PDBsum" id="4GTP"/>
<dbReference type="PDBsum" id="4GTQ"/>
<dbReference type="PDBsum" id="4GTR"/>
<dbReference type="PDBsum" id="7RN5"/>
<dbReference type="PDBsum" id="7RNI"/>
<dbReference type="PDBsum" id="8E9E"/>
<dbReference type="SMR" id="Q02293"/>
<dbReference type="BioGRID" id="249096">
    <property type="interactions" value="1"/>
</dbReference>
<dbReference type="ComplexPortal" id="CPX-2181">
    <property type="entry name" value="Protein farnesyltransferase complex"/>
</dbReference>
<dbReference type="DIP" id="DIP-6132N"/>
<dbReference type="FunCoup" id="Q02293">
    <property type="interactions" value="1567"/>
</dbReference>
<dbReference type="IntAct" id="Q02293">
    <property type="interactions" value="1"/>
</dbReference>
<dbReference type="STRING" id="10116.ENSRNOP00000010588"/>
<dbReference type="BindingDB" id="Q02293"/>
<dbReference type="ChEMBL" id="CHEMBL2095197"/>
<dbReference type="iPTMnet" id="Q02293"/>
<dbReference type="PhosphoSitePlus" id="Q02293"/>
<dbReference type="jPOST" id="Q02293"/>
<dbReference type="PaxDb" id="10116-ENSRNOP00000010588"/>
<dbReference type="Ensembl" id="ENSRNOT00000010588.5">
    <property type="protein sequence ID" value="ENSRNOP00000010588.3"/>
    <property type="gene ID" value="ENSRNOG00000007660.5"/>
</dbReference>
<dbReference type="GeneID" id="64511"/>
<dbReference type="KEGG" id="rno:64511"/>
<dbReference type="UCSC" id="RGD:620119">
    <property type="organism name" value="rat"/>
</dbReference>
<dbReference type="AGR" id="RGD:620119"/>
<dbReference type="CTD" id="2342"/>
<dbReference type="RGD" id="620119">
    <property type="gene designation" value="Fntb"/>
</dbReference>
<dbReference type="eggNOG" id="KOG0365">
    <property type="taxonomic scope" value="Eukaryota"/>
</dbReference>
<dbReference type="GeneTree" id="ENSGT00950000183128"/>
<dbReference type="HOGENOM" id="CLU_028946_0_1_1"/>
<dbReference type="InParanoid" id="Q02293"/>
<dbReference type="OMA" id="WCIYWIL"/>
<dbReference type="OrthoDB" id="10261146at2759"/>
<dbReference type="PhylomeDB" id="Q02293"/>
<dbReference type="TreeFam" id="TF353162"/>
<dbReference type="BRENDA" id="2.5.1.58">
    <property type="organism ID" value="5301"/>
</dbReference>
<dbReference type="BRENDA" id="2.5.1.59">
    <property type="organism ID" value="5301"/>
</dbReference>
<dbReference type="Reactome" id="R-RNO-2514859">
    <property type="pathway name" value="Inactivation, recovery and regulation of the phototransduction cascade"/>
</dbReference>
<dbReference type="Reactome" id="R-RNO-9648002">
    <property type="pathway name" value="RAS processing"/>
</dbReference>
<dbReference type="SABIO-RK" id="Q02293"/>
<dbReference type="EvolutionaryTrace" id="Q02293"/>
<dbReference type="PRO" id="PR:Q02293"/>
<dbReference type="Proteomes" id="UP000002494">
    <property type="component" value="Chromosome 6"/>
</dbReference>
<dbReference type="Bgee" id="ENSRNOG00000007660">
    <property type="expression patterns" value="Expressed in cerebellum and 20 other cell types or tissues"/>
</dbReference>
<dbReference type="GO" id="GO:0005875">
    <property type="term" value="C:microtubule associated complex"/>
    <property type="evidence" value="ECO:0000266"/>
    <property type="project" value="RGD"/>
</dbReference>
<dbReference type="GO" id="GO:0005965">
    <property type="term" value="C:protein farnesyltransferase complex"/>
    <property type="evidence" value="ECO:0000250"/>
    <property type="project" value="UniProtKB"/>
</dbReference>
<dbReference type="GO" id="GO:0010698">
    <property type="term" value="F:acetyltransferase activator activity"/>
    <property type="evidence" value="ECO:0000266"/>
    <property type="project" value="RGD"/>
</dbReference>
<dbReference type="GO" id="GO:0019899">
    <property type="term" value="F:enzyme binding"/>
    <property type="evidence" value="ECO:0000266"/>
    <property type="project" value="RGD"/>
</dbReference>
<dbReference type="GO" id="GO:0004311">
    <property type="term" value="F:geranylgeranyl diphosphate synthase activity"/>
    <property type="evidence" value="ECO:0000266"/>
    <property type="project" value="RGD"/>
</dbReference>
<dbReference type="GO" id="GO:0004660">
    <property type="term" value="F:protein farnesyltransferase activity"/>
    <property type="evidence" value="ECO:0000314"/>
    <property type="project" value="RGD"/>
</dbReference>
<dbReference type="GO" id="GO:0008270">
    <property type="term" value="F:zinc ion binding"/>
    <property type="evidence" value="ECO:0000250"/>
    <property type="project" value="UniProtKB"/>
</dbReference>
<dbReference type="GO" id="GO:0008283">
    <property type="term" value="P:cell population proliferation"/>
    <property type="evidence" value="ECO:0000266"/>
    <property type="project" value="RGD"/>
</dbReference>
<dbReference type="GO" id="GO:0048144">
    <property type="term" value="P:fibroblast proliferation"/>
    <property type="evidence" value="ECO:0000266"/>
    <property type="project" value="RGD"/>
</dbReference>
<dbReference type="GO" id="GO:0006629">
    <property type="term" value="P:lipid metabolic process"/>
    <property type="evidence" value="ECO:0007669"/>
    <property type="project" value="UniProtKB-KW"/>
</dbReference>
<dbReference type="GO" id="GO:0008285">
    <property type="term" value="P:negative regulation of cell population proliferation"/>
    <property type="evidence" value="ECO:0000266"/>
    <property type="project" value="RGD"/>
</dbReference>
<dbReference type="GO" id="GO:0045787">
    <property type="term" value="P:positive regulation of cell cycle"/>
    <property type="evidence" value="ECO:0000315"/>
    <property type="project" value="RGD"/>
</dbReference>
<dbReference type="GO" id="GO:0008284">
    <property type="term" value="P:positive regulation of cell population proliferation"/>
    <property type="evidence" value="ECO:0000315"/>
    <property type="project" value="RGD"/>
</dbReference>
<dbReference type="GO" id="GO:0048146">
    <property type="term" value="P:positive regulation of fibroblast proliferation"/>
    <property type="evidence" value="ECO:0000266"/>
    <property type="project" value="RGD"/>
</dbReference>
<dbReference type="GO" id="GO:0018343">
    <property type="term" value="P:protein farnesylation"/>
    <property type="evidence" value="ECO:0000250"/>
    <property type="project" value="UniProtKB"/>
</dbReference>
<dbReference type="GO" id="GO:0048145">
    <property type="term" value="P:regulation of fibroblast proliferation"/>
    <property type="evidence" value="ECO:0000266"/>
    <property type="project" value="RGD"/>
</dbReference>
<dbReference type="GO" id="GO:0060632">
    <property type="term" value="P:regulation of microtubule-based movement"/>
    <property type="evidence" value="ECO:0000266"/>
    <property type="project" value="RGD"/>
</dbReference>
<dbReference type="GO" id="GO:0042060">
    <property type="term" value="P:wound healing"/>
    <property type="evidence" value="ECO:0000266"/>
    <property type="project" value="RGD"/>
</dbReference>
<dbReference type="CDD" id="cd02893">
    <property type="entry name" value="FTase"/>
    <property type="match status" value="1"/>
</dbReference>
<dbReference type="FunFam" id="1.50.10.20:FF:000007">
    <property type="entry name" value="Protein farnesyltransferase subunit beta"/>
    <property type="match status" value="1"/>
</dbReference>
<dbReference type="Gene3D" id="1.50.10.20">
    <property type="match status" value="1"/>
</dbReference>
<dbReference type="InterPro" id="IPR026872">
    <property type="entry name" value="FTB"/>
</dbReference>
<dbReference type="InterPro" id="IPR045089">
    <property type="entry name" value="PGGT1B-like"/>
</dbReference>
<dbReference type="InterPro" id="IPR001330">
    <property type="entry name" value="Prenyltrans"/>
</dbReference>
<dbReference type="InterPro" id="IPR008930">
    <property type="entry name" value="Terpenoid_cyclase/PrenylTrfase"/>
</dbReference>
<dbReference type="PANTHER" id="PTHR11774">
    <property type="entry name" value="GERANYLGERANYL TRANSFERASE TYPE BETA SUBUNIT"/>
    <property type="match status" value="1"/>
</dbReference>
<dbReference type="PANTHER" id="PTHR11774:SF6">
    <property type="entry name" value="PROTEIN FARNESYLTRANSFERASE SUBUNIT BETA"/>
    <property type="match status" value="1"/>
</dbReference>
<dbReference type="Pfam" id="PF00432">
    <property type="entry name" value="Prenyltrans"/>
    <property type="match status" value="1"/>
</dbReference>
<dbReference type="SFLD" id="SFLDG01015">
    <property type="entry name" value="Prenyltransferase_Like_1"/>
    <property type="match status" value="1"/>
</dbReference>
<dbReference type="SUPFAM" id="SSF48239">
    <property type="entry name" value="Terpenoid cyclases/Protein prenyltransferases"/>
    <property type="match status" value="1"/>
</dbReference>
<gene>
    <name type="primary">Fntb</name>
</gene>
<accession>Q02293</accession>
<proteinExistence type="evidence at protein level"/>
<feature type="chain" id="PRO_0000119763" description="Protein farnesyltransferase subunit beta">
    <location>
        <begin position="1"/>
        <end position="437"/>
    </location>
</feature>
<feature type="repeat" description="PFTB 1">
    <location>
        <begin position="123"/>
        <end position="164"/>
    </location>
</feature>
<feature type="repeat" description="PFTB 2">
    <location>
        <begin position="174"/>
        <end position="215"/>
    </location>
</feature>
<feature type="repeat" description="PFTB 3">
    <location>
        <begin position="222"/>
        <end position="263"/>
    </location>
</feature>
<feature type="repeat" description="PFTB 4">
    <location>
        <begin position="270"/>
        <end position="312"/>
    </location>
</feature>
<feature type="repeat" description="PFTB 5">
    <location>
        <begin position="332"/>
        <end position="374"/>
    </location>
</feature>
<feature type="binding site">
    <location>
        <begin position="248"/>
        <end position="251"/>
    </location>
    <ligand>
        <name>(2E,6E)-farnesyl diphosphate</name>
        <dbReference type="ChEBI" id="CHEBI:175763"/>
    </ligand>
</feature>
<feature type="binding site">
    <location>
        <begin position="291"/>
        <end position="294"/>
    </location>
    <ligand>
        <name>(2E,6E)-farnesyl diphosphate</name>
        <dbReference type="ChEBI" id="CHEBI:175763"/>
    </ligand>
</feature>
<feature type="binding site" evidence="8 11 13">
    <location>
        <position position="297"/>
    </location>
    <ligand>
        <name>Zn(2+)</name>
        <dbReference type="ChEBI" id="CHEBI:29105"/>
        <note>catalytic</note>
    </ligand>
</feature>
<feature type="binding site" evidence="8 11 13">
    <location>
        <position position="299"/>
    </location>
    <ligand>
        <name>Zn(2+)</name>
        <dbReference type="ChEBI" id="CHEBI:29105"/>
        <note>catalytic</note>
    </ligand>
</feature>
<feature type="binding site">
    <location>
        <begin position="300"/>
        <end position="303"/>
    </location>
    <ligand>
        <name>(2E,6E)-farnesyl diphosphate</name>
        <dbReference type="ChEBI" id="CHEBI:175763"/>
    </ligand>
</feature>
<feature type="binding site" evidence="8 11 13">
    <location>
        <position position="362"/>
    </location>
    <ligand>
        <name>Zn(2+)</name>
        <dbReference type="ChEBI" id="CHEBI:29105"/>
        <note>catalytic</note>
    </ligand>
</feature>
<feature type="site" description="Important for selectivity against geranylgeranyl diphosphate" evidence="1">
    <location>
        <position position="102"/>
    </location>
</feature>
<feature type="modified residue" description="Phosphoserine" evidence="2">
    <location>
        <position position="432"/>
    </location>
</feature>
<feature type="modified residue" description="Phosphothreonine" evidence="2">
    <location>
        <position position="436"/>
    </location>
</feature>
<feature type="helix" evidence="21">
    <location>
        <begin position="24"/>
        <end position="26"/>
    </location>
</feature>
<feature type="helix" evidence="21">
    <location>
        <begin position="28"/>
        <end position="33"/>
    </location>
</feature>
<feature type="helix" evidence="21">
    <location>
        <begin position="43"/>
        <end position="65"/>
    </location>
</feature>
<feature type="helix" evidence="21">
    <location>
        <begin position="75"/>
        <end position="85"/>
    </location>
</feature>
<feature type="helix" evidence="21">
    <location>
        <begin position="91"/>
        <end position="96"/>
    </location>
</feature>
<feature type="helix" evidence="21">
    <location>
        <begin position="100"/>
        <end position="113"/>
    </location>
</feature>
<feature type="helix" evidence="21">
    <location>
        <begin position="120"/>
        <end position="133"/>
    </location>
</feature>
<feature type="strand" evidence="21">
    <location>
        <begin position="138"/>
        <end position="143"/>
    </location>
</feature>
<feature type="helix" evidence="21">
    <location>
        <begin position="150"/>
        <end position="163"/>
    </location>
</feature>
<feature type="helix" evidence="21">
    <location>
        <begin position="166"/>
        <end position="171"/>
    </location>
</feature>
<feature type="helix" evidence="21">
    <location>
        <begin position="174"/>
        <end position="184"/>
    </location>
</feature>
<feature type="strand" evidence="21">
    <location>
        <begin position="191"/>
        <end position="194"/>
    </location>
</feature>
<feature type="helix" evidence="21">
    <location>
        <begin position="201"/>
        <end position="213"/>
    </location>
</feature>
<feature type="turn" evidence="21">
    <location>
        <begin position="219"/>
        <end position="224"/>
    </location>
</feature>
<feature type="helix" evidence="21">
    <location>
        <begin position="225"/>
        <end position="232"/>
    </location>
</feature>
<feature type="strand" evidence="21">
    <location>
        <begin position="237"/>
        <end position="239"/>
    </location>
</feature>
<feature type="helix" evidence="21">
    <location>
        <begin position="249"/>
        <end position="261"/>
    </location>
</feature>
<feature type="helix" evidence="21">
    <location>
        <begin position="265"/>
        <end position="267"/>
    </location>
</feature>
<feature type="helix" evidence="21">
    <location>
        <begin position="270"/>
        <end position="278"/>
    </location>
</feature>
<feature type="turn" evidence="21">
    <location>
        <begin position="283"/>
        <end position="285"/>
    </location>
</feature>
<feature type="strand" evidence="21">
    <location>
        <begin position="287"/>
        <end position="291"/>
    </location>
</feature>
<feature type="helix" evidence="21">
    <location>
        <begin position="300"/>
        <end position="303"/>
    </location>
</feature>
<feature type="turn" evidence="21">
    <location>
        <begin position="304"/>
        <end position="306"/>
    </location>
</feature>
<feature type="helix" evidence="21">
    <location>
        <begin position="307"/>
        <end position="317"/>
    </location>
</feature>
<feature type="strand" evidence="20">
    <location>
        <begin position="321"/>
        <end position="323"/>
    </location>
</feature>
<feature type="strand" evidence="20">
    <location>
        <begin position="325"/>
        <end position="327"/>
    </location>
</feature>
<feature type="helix" evidence="21">
    <location>
        <begin position="332"/>
        <end position="342"/>
    </location>
</feature>
<feature type="strand" evidence="18">
    <location>
        <begin position="348"/>
        <end position="350"/>
    </location>
</feature>
<feature type="strand" evidence="19">
    <location>
        <begin position="352"/>
        <end position="355"/>
    </location>
</feature>
<feature type="helix" evidence="21">
    <location>
        <begin position="360"/>
        <end position="374"/>
    </location>
</feature>
<feature type="strand" evidence="21">
    <location>
        <begin position="375"/>
        <end position="378"/>
    </location>
</feature>
<feature type="strand" evidence="21">
    <location>
        <begin position="381"/>
        <end position="384"/>
    </location>
</feature>
<feature type="helix" evidence="21">
    <location>
        <begin position="390"/>
        <end position="392"/>
    </location>
</feature>
<feature type="turn" evidence="21">
    <location>
        <begin position="399"/>
        <end position="401"/>
    </location>
</feature>
<feature type="helix" evidence="21">
    <location>
        <begin position="405"/>
        <end position="415"/>
    </location>
</feature>
<feature type="helix" evidence="18">
    <location>
        <begin position="424"/>
        <end position="426"/>
    </location>
</feature>
<feature type="helix" evidence="18">
    <location>
        <begin position="434"/>
        <end position="436"/>
    </location>
</feature>
<name>FNTB_RAT</name>
<reference key="1">
    <citation type="journal article" date="1991" name="Cell">
        <title>cDNA cloning and expression of the peptide-binding beta subunit of rat p21ras farnesyltransferase, the counterpart of yeast DPR1/RAM1.</title>
        <authorList>
            <person name="Chen W.-J."/>
            <person name="Andres D.A."/>
            <person name="Goldstein J.L."/>
            <person name="Russell D.W."/>
            <person name="Brown M.S."/>
        </authorList>
    </citation>
    <scope>NUCLEOTIDE SEQUENCE [MRNA]</scope>
    <scope>PARTIAL PROTEIN SEQUENCE</scope>
    <source>
        <tissue>Brain</tissue>
    </source>
</reference>
<reference key="2">
    <citation type="journal article" date="2004" name="Genome Res.">
        <title>The status, quality, and expansion of the NIH full-length cDNA project: the Mammalian Gene Collection (MGC).</title>
        <authorList>
            <consortium name="The MGC Project Team"/>
        </authorList>
    </citation>
    <scope>NUCLEOTIDE SEQUENCE [LARGE SCALE MRNA]</scope>
    <source>
        <tissue>Brain</tissue>
    </source>
</reference>
<reference key="3">
    <citation type="journal article" date="1997" name="Science">
        <title>Crystal structure of protein farnesyltransferase at 2.25-A resolution.</title>
        <authorList>
            <person name="Park H.-W."/>
            <person name="Boduluri S.R."/>
            <person name="Mooomaw J.F."/>
            <person name="Casey P.J."/>
            <person name="Beese L.S."/>
        </authorList>
    </citation>
    <scope>X-RAY CRYSTALLOGRAPHY (2.25 ANGSTROMS) IN COMPLEX WITH ZINC</scope>
</reference>
<reference key="4">
    <citation type="journal article" date="1997" name="Science">
        <authorList>
            <person name="Park H.-W."/>
            <person name="Boduluri S.R."/>
            <person name="Mooomaw J.F."/>
            <person name="Casey P.J."/>
            <person name="Beese L.S."/>
        </authorList>
    </citation>
    <scope>ERRATUM OF PUBMED:9065406</scope>
</reference>
<reference key="5">
    <citation type="journal article" date="1998" name="Biochemistry">
        <title>Protein farnesyltransferase: structure and implications for substrate binding.</title>
        <authorList>
            <person name="Dunten P."/>
            <person name="Kammlott U."/>
            <person name="Crowther R."/>
            <person name="Weber D."/>
            <person name="Palermo R."/>
            <person name="Birktoft J."/>
        </authorList>
    </citation>
    <scope>X-RAY CRYSTALLOGRAPHY (2.75 ANGSTROMS) IN COMPLEX WITH FNTA; FARNESYL DIPHOSPHATE AND ZINC IONS</scope>
    <scope>SUBUNIT</scope>
    <scope>COFACTOR</scope>
</reference>
<reference key="6">
    <citation type="journal article" date="1998" name="Biochemistry">
        <title>Cocrystal structure of protein farnesyltransferase complexed with a farnesyl diphosphate substrate.</title>
        <authorList>
            <person name="Long S.B."/>
            <person name="Casey P.J."/>
            <person name="Beese L.S."/>
        </authorList>
    </citation>
    <scope>X-RAY CRYSTALLOGRAPHY (3.4 ANGSTROMS) IN COMPLEX WITH FNTA; FARNESYL DIPHOSPHATE AND ZINC IONS</scope>
    <scope>COFACTOR</scope>
    <scope>SUBUNIT</scope>
</reference>
<reference key="7">
    <citation type="journal article" date="1998" name="Biochemistry">
        <title>Crystal structure of farnesyl protein transferase complexed with a CaaX peptide and farnesyl diphosphate analogue.</title>
        <authorList>
            <person name="Strickland C.L."/>
            <person name="Windsor W.T."/>
            <person name="Syto R."/>
            <person name="Wang L."/>
            <person name="Bond R."/>
            <person name="Wu Z."/>
            <person name="Schwartz J."/>
            <person name="Le H.V."/>
            <person name="Beese L.S."/>
            <person name="Weber P.C."/>
        </authorList>
    </citation>
    <scope>X-RAY CRYSTALLOGRAPHY (2.40 ANGSTROMS) IN COMPLEX WITH FNTA; ZINC IONS AND FARNESYL DIPHOSPHATE ANALOG</scope>
    <scope>COFACTOR</scope>
    <scope>SUBUNIT</scope>
</reference>
<reference key="8">
    <citation type="journal article" date="2000" name="Structure">
        <title>The basis for K-Ras4B binding specificity to protein farnesyltransferase revealed by 2 A resolution ternary complex structures.</title>
        <authorList>
            <person name="Long S.B."/>
            <person name="Casey P.J."/>
            <person name="Beese L.S."/>
        </authorList>
    </citation>
    <scope>X-RAY CRYSTALLOGRAPHY (2.00 ANGSTROMS) IN COMPLEX WITH ZINC IONS; FNTA AND KRAS</scope>
    <scope>INTERACTION WITH KRAS</scope>
    <scope>CATALYTIC ACTIVITY</scope>
    <scope>COFACTOR</scope>
    <scope>FUNCTION</scope>
    <scope>SUBUNIT</scope>
</reference>
<reference key="9">
    <citation type="journal article" date="2001" name="Proc. Natl. Acad. Sci. U.S.A.">
        <title>The crystal structure of human protein farnesyltransferase reveals the basis for inhibition by CaaX tetrapeptides and their mimetics.</title>
        <authorList>
            <person name="Long S.B."/>
            <person name="Hancock P.J."/>
            <person name="Kral A.M."/>
            <person name="Hellinga H.W."/>
            <person name="Beese L.S."/>
        </authorList>
    </citation>
    <scope>X-RAY CRYSTALLOGRAPHY (2.3 ANGSTROMS) IN COMPLEX WITH FNTA AND GERANYLGERANYL DIPHOSPHATE</scope>
    <scope>SUBUNIT</scope>
</reference>
<reference key="10">
    <citation type="journal article" date="2002" name="Nature">
        <title>Reaction path of protein farnesyltransferase at atomic resolution.</title>
        <authorList>
            <person name="Long S.B."/>
            <person name="Casey P.J."/>
            <person name="Beese L.S."/>
        </authorList>
    </citation>
    <scope>X-RAY CRYSTALLOGRAPHY (2.10 ANGSTROMS) IN COMPLEX WITH FNTA; FARNESYL DIPHOSPHATE AND ZINC IONS</scope>
    <scope>SUBUNIT</scope>
    <scope>COFACTOR</scope>
</reference>
<reference key="11">
    <citation type="journal article" date="2003" name="Biochemistry">
        <title>Biochemical and structural studies with prenyl diphosphate analogues provide insights into isoprenoid recognition by protein farnesyl transferase.</title>
        <authorList>
            <person name="Turek-Etienne T.C."/>
            <person name="Strickland C.L."/>
            <person name="Distefano M.D."/>
        </authorList>
    </citation>
    <scope>X-RAY CRYSTALLOGRAPHY (2.10 ANGSTROMS) OF 1-427 IN COMPLEX WITH FNTA; GERANYLGERANYL DIPHOSPHATE AND ZINC IONS</scope>
    <scope>COFACTOR</scope>
    <scope>SUBUNIT</scope>
</reference>
<reference key="12">
    <citation type="journal article" date="2004" name="J. Mol. Biol.">
        <title>Crystallographic analysis of CaaX prenyltransferases complexed with substrates defines rules of protein substrate selectivity.</title>
        <authorList>
            <person name="Reid T.S."/>
            <person name="Terry K.L."/>
            <person name="Casey P.J."/>
            <person name="Beese L.S."/>
        </authorList>
    </citation>
    <scope>X-RAY CRYSTALLOGRAPHY (2.25 ANGSTROMS) IN COMPLEX WITH FNTA AND ZINC IONS</scope>
    <scope>COFACTOR</scope>
    <scope>SUBUNIT</scope>
</reference>
<reference key="13">
    <citation type="journal article" date="2008" name="Chem. Biol. Drug Des.">
        <title>Caged protein prenyltransferase substrates: tools for understanding protein prenylation.</title>
        <authorList>
            <person name="DeGraw A.J."/>
            <person name="Hast M.A."/>
            <person name="Xu J."/>
            <person name="Mullen D."/>
            <person name="Beese L.S."/>
            <person name="Barany G."/>
            <person name="Distefano M.D."/>
        </authorList>
    </citation>
    <scope>X-RAY CRYSTALLOGRAPHY (2.70 ANGSTROMS) IN COMPLEX WITH FNTA; FARNESYL DIPHOSPHATE AND ZINC</scope>
    <scope>COFACTOR</scope>
    <scope>CATALYTIC ACTIVITY</scope>
    <scope>SUBUNIT</scope>
</reference>
<reference key="14">
    <citation type="journal article" date="2009" name="Chem. Biol.">
        <title>Structural basis for binding and selectivity of antimalarial and anticancer ethylenediamine inhibitors to protein farnesyltransferase.</title>
        <authorList>
            <person name="Hast M.A."/>
            <person name="Fletcher S."/>
            <person name="Cummings C.G."/>
            <person name="Pusateri E.E."/>
            <person name="Blaskovich M.A."/>
            <person name="Rivas K."/>
            <person name="Gelb M.H."/>
            <person name="Van Voorhis W.C."/>
            <person name="Sebti S.M."/>
            <person name="Hamilton A.D."/>
            <person name="Beese L.S."/>
        </authorList>
    </citation>
    <scope>X-RAY CRYSTALLOGRAPHY (1.90 ANGSTROMS) IN COMPLEX WITH FNTA; FARNESYL DIPHOSPHATE AND ZINC IONS</scope>
    <scope>CATALYTIC ACTIVITY</scope>
    <scope>FUNCTION</scope>
    <scope>COFACTOR</scope>
    <scope>SUBUNIT</scope>
</reference>
<reference key="15">
    <citation type="journal article" date="2009" name="Nat. Chem. Biol.">
        <title>Analysis of the eukaryotic prenylome by isoprenoid affinity tagging.</title>
        <authorList>
            <person name="Nguyen U.T."/>
            <person name="Guo Z."/>
            <person name="Delon C."/>
            <person name="Wu Y."/>
            <person name="Deraeve C."/>
            <person name="Franzel B."/>
            <person name="Bon R.S."/>
            <person name="Blankenfeldt W."/>
            <person name="Goody R.S."/>
            <person name="Waldmann H."/>
            <person name="Wolters D."/>
            <person name="Alexandrov K."/>
        </authorList>
    </citation>
    <scope>X-RAY CRYSTALLOGRAPHY (2.75 ANGSTROMS) OF 1-427 IN COMPLEX WITH FNTA AND ZINC IONS</scope>
    <scope>SUBUNIT</scope>
    <scope>COFACTOR</scope>
    <scope>CATALYTIC ACTIVITY</scope>
    <scope>FUNCTION</scope>
</reference>
<reference key="16">
    <citation type="journal article" date="2010" name="Bioorg. Med. Chem. Lett.">
        <title>Discovery of C-imidazole azaheptapyridine FPT inhibitors.</title>
        <authorList>
            <person name="Zhu H.Y."/>
            <person name="Cooper A.B."/>
            <person name="Desai J."/>
            <person name="Njoroge G."/>
            <person name="Kirschmeier P."/>
            <person name="Bishop W.R."/>
            <person name="Strickland C."/>
            <person name="Hruza A."/>
            <person name="Doll R.J."/>
            <person name="Girijavallabhan V.M."/>
        </authorList>
    </citation>
    <scope>X-RAY CRYSTALLOGRAPHY (2.10 ANGSTROMS) IN COMPLEX WITH FNTA; FARNESYL DIPHOSPHATE AND ZINC</scope>
    <scope>SUBUNIT</scope>
    <scope>COFACTOR</scope>
</reference>
<reference key="17">
    <citation type="journal article" date="2012" name="J. Med. Chem.">
        <title>Development of selective, potent RabGGTase inhibitors.</title>
        <authorList>
            <person name="Stigter E.A."/>
            <person name="Guo Z."/>
            <person name="Bon R.S."/>
            <person name="Wu Y.W."/>
            <person name="Choidas A."/>
            <person name="Wolf A."/>
            <person name="Menninger S."/>
            <person name="Waldmann H."/>
            <person name="Blankenfeldt W."/>
            <person name="Goody R.S."/>
        </authorList>
    </citation>
    <scope>X-RAY CRYSTALLOGRAPHY (2.15 ANGSTROMS) OF 1-427 IN COMPLEX WITH FNTA; FARNESYL DIPHOSPHATE AND ZINC IONS</scope>
    <scope>SUBUNIT</scope>
    <scope>COFACTOR</scope>
    <scope>CATALYTIC ACTIVITY</scope>
    <scope>FUNCTION</scope>
</reference>
<protein>
    <recommendedName>
        <fullName>Protein farnesyltransferase subunit beta</fullName>
        <shortName>FTase-beta</shortName>
        <ecNumber evidence="3 8 9 10 12">2.5.1.58</ecNumber>
    </recommendedName>
    <alternativeName>
        <fullName>CAAX farnesyltransferase subunit beta</fullName>
    </alternativeName>
    <alternativeName>
        <fullName>Ras proteins prenyltransferase subunit beta</fullName>
    </alternativeName>
</protein>
<comment type="function">
    <text evidence="3 9 10 12">Essential subunit of the farnesyltransferase complex. Catalyzes the transfer of a farnesyl moiety from farnesyl diphosphate to a cysteine at the fourth position from the C-terminus of several proteins having the C-terminal sequence Cys-aliphatic-aliphatic-X.</text>
</comment>
<comment type="catalytic activity">
    <reaction evidence="3 8 9 10 12">
        <text>L-cysteinyl-[protein] + (2E,6E)-farnesyl diphosphate = S-(2E,6E)-farnesyl-L-cysteinyl-[protein] + diphosphate</text>
        <dbReference type="Rhea" id="RHEA:13345"/>
        <dbReference type="Rhea" id="RHEA-COMP:10131"/>
        <dbReference type="Rhea" id="RHEA-COMP:11535"/>
        <dbReference type="ChEBI" id="CHEBI:29950"/>
        <dbReference type="ChEBI" id="CHEBI:33019"/>
        <dbReference type="ChEBI" id="CHEBI:86019"/>
        <dbReference type="ChEBI" id="CHEBI:175763"/>
        <dbReference type="EC" id="2.5.1.58"/>
    </reaction>
</comment>
<comment type="cofactor">
    <cofactor evidence="3 5 6 7 8 9 10 11 12 14 15 16">
        <name>Zn(2+)</name>
        <dbReference type="ChEBI" id="CHEBI:29105"/>
    </cofactor>
    <text evidence="3 5 6 7 8 9 10 11 12 14 15 16">Binds 1 zinc ion per subunit.</text>
</comment>
<comment type="subunit">
    <text evidence="3 4 5 6 7 8 9 10 11 12 13 14 15 16">Heterodimer of FNTA and FNTB.</text>
</comment>
<comment type="interaction">
    <interactant intactId="EBI-602454">
        <id>Q02293</id>
    </interactant>
    <interactant intactId="EBI-602447">
        <id>Q04631</id>
        <label>Fnta</label>
    </interactant>
    <organismsDiffer>false</organismsDiffer>
    <experiments>16</experiments>
</comment>
<comment type="similarity">
    <text evidence="17">Belongs to the protein prenyltransferase subunit beta family.</text>
</comment>
<keyword id="KW-0002">3D-structure</keyword>
<keyword id="KW-0903">Direct protein sequencing</keyword>
<keyword id="KW-0443">Lipid metabolism</keyword>
<keyword id="KW-0479">Metal-binding</keyword>
<keyword id="KW-0597">Phosphoprotein</keyword>
<keyword id="KW-0637">Prenyltransferase</keyword>
<keyword id="KW-1185">Reference proteome</keyword>
<keyword id="KW-0677">Repeat</keyword>
<keyword id="KW-0808">Transferase</keyword>
<keyword id="KW-0862">Zinc</keyword>